<comment type="catalytic activity">
    <reaction evidence="1">
        <text>(S)-malate + NAD(+) = pyruvate + CO2 + NADH</text>
        <dbReference type="Rhea" id="RHEA:12653"/>
        <dbReference type="ChEBI" id="CHEBI:15361"/>
        <dbReference type="ChEBI" id="CHEBI:15589"/>
        <dbReference type="ChEBI" id="CHEBI:16526"/>
        <dbReference type="ChEBI" id="CHEBI:57540"/>
        <dbReference type="ChEBI" id="CHEBI:57945"/>
        <dbReference type="EC" id="1.1.1.38"/>
    </reaction>
</comment>
<comment type="catalytic activity">
    <reaction evidence="1">
        <text>oxaloacetate + H(+) = pyruvate + CO2</text>
        <dbReference type="Rhea" id="RHEA:15641"/>
        <dbReference type="ChEBI" id="CHEBI:15361"/>
        <dbReference type="ChEBI" id="CHEBI:15378"/>
        <dbReference type="ChEBI" id="CHEBI:16452"/>
        <dbReference type="ChEBI" id="CHEBI:16526"/>
        <dbReference type="EC" id="1.1.1.38"/>
    </reaction>
</comment>
<comment type="cofactor">
    <cofactor evidence="1">
        <name>Mg(2+)</name>
        <dbReference type="ChEBI" id="CHEBI:18420"/>
    </cofactor>
    <cofactor evidence="1">
        <name>Mn(2+)</name>
        <dbReference type="ChEBI" id="CHEBI:29035"/>
    </cofactor>
    <text evidence="1">Divalent metal cations. Prefers magnesium or manganese.</text>
</comment>
<comment type="subunit">
    <text evidence="1">Homotetramer.</text>
</comment>
<comment type="similarity">
    <text evidence="1">Belongs to the malic enzymes family.</text>
</comment>
<feature type="chain" id="PRO_1000088076" description="NAD-dependent malic enzyme">
    <location>
        <begin position="1"/>
        <end position="562"/>
    </location>
</feature>
<feature type="active site" description="Proton donor" evidence="1">
    <location>
        <position position="101"/>
    </location>
</feature>
<feature type="active site" description="Proton acceptor" evidence="1">
    <location>
        <position position="172"/>
    </location>
</feature>
<feature type="binding site" evidence="1">
    <location>
        <position position="154"/>
    </location>
    <ligand>
        <name>NAD(+)</name>
        <dbReference type="ChEBI" id="CHEBI:57540"/>
    </ligand>
</feature>
<feature type="binding site" evidence="1">
    <location>
        <position position="243"/>
    </location>
    <ligand>
        <name>a divalent metal cation</name>
        <dbReference type="ChEBI" id="CHEBI:60240"/>
    </ligand>
</feature>
<feature type="binding site" evidence="1">
    <location>
        <position position="244"/>
    </location>
    <ligand>
        <name>a divalent metal cation</name>
        <dbReference type="ChEBI" id="CHEBI:60240"/>
    </ligand>
</feature>
<feature type="binding site" evidence="1">
    <location>
        <position position="267"/>
    </location>
    <ligand>
        <name>a divalent metal cation</name>
        <dbReference type="ChEBI" id="CHEBI:60240"/>
    </ligand>
</feature>
<feature type="binding site" evidence="1">
    <location>
        <position position="267"/>
    </location>
    <ligand>
        <name>NAD(+)</name>
        <dbReference type="ChEBI" id="CHEBI:57540"/>
    </ligand>
</feature>
<feature type="binding site" evidence="1">
    <location>
        <position position="415"/>
    </location>
    <ligand>
        <name>NAD(+)</name>
        <dbReference type="ChEBI" id="CHEBI:57540"/>
    </ligand>
</feature>
<feature type="site" description="Important for activity" evidence="1">
    <location>
        <position position="267"/>
    </location>
</feature>
<proteinExistence type="inferred from homology"/>
<name>MAO1_SHEPA</name>
<keyword id="KW-0479">Metal-binding</keyword>
<keyword id="KW-0520">NAD</keyword>
<keyword id="KW-0560">Oxidoreductase</keyword>
<keyword id="KW-1185">Reference proteome</keyword>
<sequence length="562" mass="62323">MDDNKRPLYLPFAGPAILEAPLINKGSAFTDEERIFFNLEGLLPHVIETIEEQASRAYDQYKNFSNDLDKHIYLRNIQDTNETLYYRLVQNHITEMMPIIYTPTVGMACERFSKDYRRNRGLFISYANKDRIDDILNNSTRQKVKIIVVTDGERILGLGDQGIGGMGIPIGKLSLYTSCGGISPAYTLPITLDVGTDNPHLLEDPMYMGMRSPRIGGEEYTEFVEAFMQAVHRRWPDALIQFEDFAQKNAMPLLERYKDQYCCFNDDIQGTAAVTVGSLLAACKAAKTQLSEQRITFLGAGSAGCGIAEAIVAQMVSEGISEAQARKQVFMVDRWGMLQSNMPNLLPFQQKLAQNCDDITSWDNFSDNISLLDVVNNAKPTVLIGVSGAPGLFTEEIIKAMHSHCKRPIVFPLSNPTSRVEATPKDILHWTQGQALVATGSPFEPVVVDDVTYEIAQCNNSYIFPGIGLGVLASGAKRVSDAMLMASSRALAECSPLAIDGEGSLLPKLEDIHKVSKHIAFAVARTAIEEGHALPTTNELLTYAIEDNFWTAEYRSYKRTAF</sequence>
<accession>A8H7G5</accession>
<reference key="1">
    <citation type="submission" date="2007-10" db="EMBL/GenBank/DDBJ databases">
        <title>Complete sequence of Shewanella pealeana ATCC 700345.</title>
        <authorList>
            <consortium name="US DOE Joint Genome Institute"/>
            <person name="Copeland A."/>
            <person name="Lucas S."/>
            <person name="Lapidus A."/>
            <person name="Barry K."/>
            <person name="Glavina del Rio T."/>
            <person name="Dalin E."/>
            <person name="Tice H."/>
            <person name="Pitluck S."/>
            <person name="Chertkov O."/>
            <person name="Brettin T."/>
            <person name="Bruce D."/>
            <person name="Detter J.C."/>
            <person name="Han C."/>
            <person name="Schmutz J."/>
            <person name="Larimer F."/>
            <person name="Land M."/>
            <person name="Hauser L."/>
            <person name="Kyrpides N."/>
            <person name="Kim E."/>
            <person name="Zhao J.-S.Z."/>
            <person name="Manno D."/>
            <person name="Hawari J."/>
            <person name="Richardson P."/>
        </authorList>
    </citation>
    <scope>NUCLEOTIDE SEQUENCE [LARGE SCALE GENOMIC DNA]</scope>
    <source>
        <strain>ATCC 700345 / ANG-SQ1</strain>
    </source>
</reference>
<dbReference type="EC" id="1.1.1.38" evidence="1"/>
<dbReference type="EMBL" id="CP000851">
    <property type="protein sequence ID" value="ABV88502.1"/>
    <property type="molecule type" value="Genomic_DNA"/>
</dbReference>
<dbReference type="RefSeq" id="WP_012156403.1">
    <property type="nucleotide sequence ID" value="NC_009901.1"/>
</dbReference>
<dbReference type="SMR" id="A8H7G5"/>
<dbReference type="STRING" id="398579.Spea_3186"/>
<dbReference type="KEGG" id="spl:Spea_3186"/>
<dbReference type="eggNOG" id="COG0281">
    <property type="taxonomic scope" value="Bacteria"/>
</dbReference>
<dbReference type="HOGENOM" id="CLU_011405_5_2_6"/>
<dbReference type="OrthoDB" id="3314528at2"/>
<dbReference type="Proteomes" id="UP000002608">
    <property type="component" value="Chromosome"/>
</dbReference>
<dbReference type="GO" id="GO:0005829">
    <property type="term" value="C:cytosol"/>
    <property type="evidence" value="ECO:0007669"/>
    <property type="project" value="TreeGrafter"/>
</dbReference>
<dbReference type="GO" id="GO:0004471">
    <property type="term" value="F:malate dehydrogenase (decarboxylating) (NAD+) activity"/>
    <property type="evidence" value="ECO:0007669"/>
    <property type="project" value="UniProtKB-UniRule"/>
</dbReference>
<dbReference type="GO" id="GO:0046872">
    <property type="term" value="F:metal ion binding"/>
    <property type="evidence" value="ECO:0007669"/>
    <property type="project" value="UniProtKB-KW"/>
</dbReference>
<dbReference type="GO" id="GO:0051287">
    <property type="term" value="F:NAD binding"/>
    <property type="evidence" value="ECO:0007669"/>
    <property type="project" value="InterPro"/>
</dbReference>
<dbReference type="GO" id="GO:0008948">
    <property type="term" value="F:oxaloacetate decarboxylase activity"/>
    <property type="evidence" value="ECO:0007669"/>
    <property type="project" value="UniProtKB-UniRule"/>
</dbReference>
<dbReference type="GO" id="GO:0006108">
    <property type="term" value="P:malate metabolic process"/>
    <property type="evidence" value="ECO:0007669"/>
    <property type="project" value="TreeGrafter"/>
</dbReference>
<dbReference type="CDD" id="cd05312">
    <property type="entry name" value="NAD_bind_1_malic_enz"/>
    <property type="match status" value="1"/>
</dbReference>
<dbReference type="FunFam" id="3.40.50.10380:FF:000001">
    <property type="entry name" value="NAD-dependent malic enzyme"/>
    <property type="match status" value="1"/>
</dbReference>
<dbReference type="FunFam" id="3.40.50.720:FF:000055">
    <property type="entry name" value="NAD-dependent malic enzyme"/>
    <property type="match status" value="1"/>
</dbReference>
<dbReference type="Gene3D" id="3.40.50.10380">
    <property type="entry name" value="Malic enzyme, N-terminal domain"/>
    <property type="match status" value="1"/>
</dbReference>
<dbReference type="Gene3D" id="3.40.50.720">
    <property type="entry name" value="NAD(P)-binding Rossmann-like Domain"/>
    <property type="match status" value="1"/>
</dbReference>
<dbReference type="HAMAP" id="MF_01619">
    <property type="entry name" value="NAD_malic_enz"/>
    <property type="match status" value="1"/>
</dbReference>
<dbReference type="InterPro" id="IPR046346">
    <property type="entry name" value="Aminoacid_DH-like_N_sf"/>
</dbReference>
<dbReference type="InterPro" id="IPR015884">
    <property type="entry name" value="Malic_enzyme_CS"/>
</dbReference>
<dbReference type="InterPro" id="IPR012301">
    <property type="entry name" value="Malic_N_dom"/>
</dbReference>
<dbReference type="InterPro" id="IPR037062">
    <property type="entry name" value="Malic_N_dom_sf"/>
</dbReference>
<dbReference type="InterPro" id="IPR012302">
    <property type="entry name" value="Malic_NAD-bd"/>
</dbReference>
<dbReference type="InterPro" id="IPR001891">
    <property type="entry name" value="Malic_OxRdtase"/>
</dbReference>
<dbReference type="InterPro" id="IPR036291">
    <property type="entry name" value="NAD(P)-bd_dom_sf"/>
</dbReference>
<dbReference type="InterPro" id="IPR023667">
    <property type="entry name" value="NAD_malic_enz_proteobac"/>
</dbReference>
<dbReference type="NCBIfam" id="NF010052">
    <property type="entry name" value="PRK13529.1"/>
    <property type="match status" value="1"/>
</dbReference>
<dbReference type="PANTHER" id="PTHR23406">
    <property type="entry name" value="MALIC ENZYME-RELATED"/>
    <property type="match status" value="1"/>
</dbReference>
<dbReference type="PANTHER" id="PTHR23406:SF34">
    <property type="entry name" value="NAD-DEPENDENT MALIC ENZYME, MITOCHONDRIAL"/>
    <property type="match status" value="1"/>
</dbReference>
<dbReference type="Pfam" id="PF00390">
    <property type="entry name" value="malic"/>
    <property type="match status" value="1"/>
</dbReference>
<dbReference type="Pfam" id="PF03949">
    <property type="entry name" value="Malic_M"/>
    <property type="match status" value="1"/>
</dbReference>
<dbReference type="PIRSF" id="PIRSF000106">
    <property type="entry name" value="ME"/>
    <property type="match status" value="1"/>
</dbReference>
<dbReference type="PRINTS" id="PR00072">
    <property type="entry name" value="MALOXRDTASE"/>
</dbReference>
<dbReference type="SMART" id="SM01274">
    <property type="entry name" value="malic"/>
    <property type="match status" value="1"/>
</dbReference>
<dbReference type="SMART" id="SM00919">
    <property type="entry name" value="Malic_M"/>
    <property type="match status" value="1"/>
</dbReference>
<dbReference type="SUPFAM" id="SSF53223">
    <property type="entry name" value="Aminoacid dehydrogenase-like, N-terminal domain"/>
    <property type="match status" value="1"/>
</dbReference>
<dbReference type="SUPFAM" id="SSF51735">
    <property type="entry name" value="NAD(P)-binding Rossmann-fold domains"/>
    <property type="match status" value="1"/>
</dbReference>
<dbReference type="PROSITE" id="PS00331">
    <property type="entry name" value="MALIC_ENZYMES"/>
    <property type="match status" value="1"/>
</dbReference>
<protein>
    <recommendedName>
        <fullName evidence="1">NAD-dependent malic enzyme</fullName>
        <shortName evidence="1">NAD-ME</shortName>
        <ecNumber evidence="1">1.1.1.38</ecNumber>
    </recommendedName>
</protein>
<evidence type="ECO:0000255" key="1">
    <source>
        <dbReference type="HAMAP-Rule" id="MF_01619"/>
    </source>
</evidence>
<gene>
    <name evidence="1" type="primary">maeA</name>
    <name type="ordered locus">Spea_3186</name>
</gene>
<organism>
    <name type="scientific">Shewanella pealeana (strain ATCC 700345 / ANG-SQ1)</name>
    <dbReference type="NCBI Taxonomy" id="398579"/>
    <lineage>
        <taxon>Bacteria</taxon>
        <taxon>Pseudomonadati</taxon>
        <taxon>Pseudomonadota</taxon>
        <taxon>Gammaproteobacteria</taxon>
        <taxon>Alteromonadales</taxon>
        <taxon>Shewanellaceae</taxon>
        <taxon>Shewanella</taxon>
    </lineage>
</organism>